<name>IHFA_ECO57</name>
<comment type="function">
    <text evidence="1">This protein is one of the two subunits of integration host factor, a specific DNA-binding protein that functions in genetic recombination as well as in transcriptional and translational control.</text>
</comment>
<comment type="subunit">
    <text evidence="1">Heterodimer of an alpha and a beta chain.</text>
</comment>
<comment type="similarity">
    <text evidence="3">Belongs to the bacterial histone-like protein family.</text>
</comment>
<gene>
    <name type="primary">ihfA</name>
    <name type="synonym">himA</name>
    <name type="ordered locus">Z2741</name>
    <name type="ordered locus">ECs2419</name>
</gene>
<proteinExistence type="inferred from homology"/>
<sequence length="99" mass="11354">MALTKAEMSEYLFDKLGLSKRDAKELVELFFEEIRRALENGEQVKLSGFGNFDLRDKNQRPGRNPKTGEDIPITARRVVTFRPGQKLKSRVENASPKDE</sequence>
<keyword id="KW-0233">DNA recombination</keyword>
<keyword id="KW-0238">DNA-binding</keyword>
<keyword id="KW-1185">Reference proteome</keyword>
<keyword id="KW-0804">Transcription</keyword>
<keyword id="KW-0805">Transcription regulation</keyword>
<keyword id="KW-0810">Translation regulation</keyword>
<organism>
    <name type="scientific">Escherichia coli O157:H7</name>
    <dbReference type="NCBI Taxonomy" id="83334"/>
    <lineage>
        <taxon>Bacteria</taxon>
        <taxon>Pseudomonadati</taxon>
        <taxon>Pseudomonadota</taxon>
        <taxon>Gammaproteobacteria</taxon>
        <taxon>Enterobacterales</taxon>
        <taxon>Enterobacteriaceae</taxon>
        <taxon>Escherichia</taxon>
    </lineage>
</organism>
<feature type="chain" id="PRO_0000105007" description="Integration host factor subunit alpha">
    <location>
        <begin position="1"/>
        <end position="99"/>
    </location>
</feature>
<feature type="region of interest" description="Disordered" evidence="2">
    <location>
        <begin position="49"/>
        <end position="73"/>
    </location>
</feature>
<protein>
    <recommendedName>
        <fullName>Integration host factor subunit alpha</fullName>
        <shortName>IHF-alpha</shortName>
    </recommendedName>
</protein>
<evidence type="ECO:0000250" key="1"/>
<evidence type="ECO:0000256" key="2">
    <source>
        <dbReference type="SAM" id="MobiDB-lite"/>
    </source>
</evidence>
<evidence type="ECO:0000305" key="3"/>
<reference key="1">
    <citation type="journal article" date="2001" name="Nature">
        <title>Genome sequence of enterohaemorrhagic Escherichia coli O157:H7.</title>
        <authorList>
            <person name="Perna N.T."/>
            <person name="Plunkett G. III"/>
            <person name="Burland V."/>
            <person name="Mau B."/>
            <person name="Glasner J.D."/>
            <person name="Rose D.J."/>
            <person name="Mayhew G.F."/>
            <person name="Evans P.S."/>
            <person name="Gregor J."/>
            <person name="Kirkpatrick H.A."/>
            <person name="Posfai G."/>
            <person name="Hackett J."/>
            <person name="Klink S."/>
            <person name="Boutin A."/>
            <person name="Shao Y."/>
            <person name="Miller L."/>
            <person name="Grotbeck E.J."/>
            <person name="Davis N.W."/>
            <person name="Lim A."/>
            <person name="Dimalanta E.T."/>
            <person name="Potamousis K."/>
            <person name="Apodaca J."/>
            <person name="Anantharaman T.S."/>
            <person name="Lin J."/>
            <person name="Yen G."/>
            <person name="Schwartz D.C."/>
            <person name="Welch R.A."/>
            <person name="Blattner F.R."/>
        </authorList>
    </citation>
    <scope>NUCLEOTIDE SEQUENCE [LARGE SCALE GENOMIC DNA]</scope>
    <source>
        <strain>O157:H7 / EDL933 / ATCC 700927 / EHEC</strain>
    </source>
</reference>
<reference key="2">
    <citation type="journal article" date="2001" name="DNA Res.">
        <title>Complete genome sequence of enterohemorrhagic Escherichia coli O157:H7 and genomic comparison with a laboratory strain K-12.</title>
        <authorList>
            <person name="Hayashi T."/>
            <person name="Makino K."/>
            <person name="Ohnishi M."/>
            <person name="Kurokawa K."/>
            <person name="Ishii K."/>
            <person name="Yokoyama K."/>
            <person name="Han C.-G."/>
            <person name="Ohtsubo E."/>
            <person name="Nakayama K."/>
            <person name="Murata T."/>
            <person name="Tanaka M."/>
            <person name="Tobe T."/>
            <person name="Iida T."/>
            <person name="Takami H."/>
            <person name="Honda T."/>
            <person name="Sasakawa C."/>
            <person name="Ogasawara N."/>
            <person name="Yasunaga T."/>
            <person name="Kuhara S."/>
            <person name="Shiba T."/>
            <person name="Hattori M."/>
            <person name="Shinagawa H."/>
        </authorList>
    </citation>
    <scope>NUCLEOTIDE SEQUENCE [LARGE SCALE GENOMIC DNA]</scope>
    <source>
        <strain>O157:H7 / Sakai / RIMD 0509952 / EHEC</strain>
    </source>
</reference>
<accession>P0A6X9</accession>
<accession>P06984</accession>
<dbReference type="EMBL" id="AE005174">
    <property type="protein sequence ID" value="AAG56699.1"/>
    <property type="molecule type" value="Genomic_DNA"/>
</dbReference>
<dbReference type="EMBL" id="BA000007">
    <property type="protein sequence ID" value="BAB35842.1"/>
    <property type="molecule type" value="Genomic_DNA"/>
</dbReference>
<dbReference type="PIR" id="C90931">
    <property type="entry name" value="C90931"/>
</dbReference>
<dbReference type="PIR" id="G85779">
    <property type="entry name" value="G85779"/>
</dbReference>
<dbReference type="RefSeq" id="NP_310446.1">
    <property type="nucleotide sequence ID" value="NC_002695.1"/>
</dbReference>
<dbReference type="RefSeq" id="WP_001229265.1">
    <property type="nucleotide sequence ID" value="NZ_VOAI01000007.1"/>
</dbReference>
<dbReference type="SMR" id="P0A6X9"/>
<dbReference type="STRING" id="155864.Z2741"/>
<dbReference type="GeneID" id="913811"/>
<dbReference type="GeneID" id="93775925"/>
<dbReference type="KEGG" id="ece:Z2741"/>
<dbReference type="KEGG" id="ecs:ECs_2419"/>
<dbReference type="PATRIC" id="fig|386585.9.peg.2533"/>
<dbReference type="eggNOG" id="COG0776">
    <property type="taxonomic scope" value="Bacteria"/>
</dbReference>
<dbReference type="HOGENOM" id="CLU_105066_1_3_6"/>
<dbReference type="OMA" id="EMLFDQV"/>
<dbReference type="Proteomes" id="UP000000558">
    <property type="component" value="Chromosome"/>
</dbReference>
<dbReference type="Proteomes" id="UP000002519">
    <property type="component" value="Chromosome"/>
</dbReference>
<dbReference type="GO" id="GO:0005829">
    <property type="term" value="C:cytosol"/>
    <property type="evidence" value="ECO:0007669"/>
    <property type="project" value="TreeGrafter"/>
</dbReference>
<dbReference type="GO" id="GO:0003677">
    <property type="term" value="F:DNA binding"/>
    <property type="evidence" value="ECO:0007669"/>
    <property type="project" value="UniProtKB-UniRule"/>
</dbReference>
<dbReference type="GO" id="GO:0030527">
    <property type="term" value="F:structural constituent of chromatin"/>
    <property type="evidence" value="ECO:0007669"/>
    <property type="project" value="InterPro"/>
</dbReference>
<dbReference type="GO" id="GO:0006310">
    <property type="term" value="P:DNA recombination"/>
    <property type="evidence" value="ECO:0007669"/>
    <property type="project" value="UniProtKB-UniRule"/>
</dbReference>
<dbReference type="GO" id="GO:0009893">
    <property type="term" value="P:positive regulation of metabolic process"/>
    <property type="evidence" value="ECO:0007669"/>
    <property type="project" value="UniProtKB-ARBA"/>
</dbReference>
<dbReference type="GO" id="GO:0006355">
    <property type="term" value="P:regulation of DNA-templated transcription"/>
    <property type="evidence" value="ECO:0007669"/>
    <property type="project" value="UniProtKB-UniRule"/>
</dbReference>
<dbReference type="GO" id="GO:0006417">
    <property type="term" value="P:regulation of translation"/>
    <property type="evidence" value="ECO:0007669"/>
    <property type="project" value="UniProtKB-UniRule"/>
</dbReference>
<dbReference type="CDD" id="cd13835">
    <property type="entry name" value="IHF_A"/>
    <property type="match status" value="1"/>
</dbReference>
<dbReference type="FunFam" id="4.10.520.10:FF:000002">
    <property type="entry name" value="Integration host factor subunit alpha"/>
    <property type="match status" value="1"/>
</dbReference>
<dbReference type="Gene3D" id="4.10.520.10">
    <property type="entry name" value="IHF-like DNA-binding proteins"/>
    <property type="match status" value="1"/>
</dbReference>
<dbReference type="HAMAP" id="MF_00380">
    <property type="entry name" value="IHF_alpha"/>
    <property type="match status" value="1"/>
</dbReference>
<dbReference type="InterPro" id="IPR000119">
    <property type="entry name" value="Hist_DNA-bd"/>
</dbReference>
<dbReference type="InterPro" id="IPR020816">
    <property type="entry name" value="Histone-like_DNA-bd_CS"/>
</dbReference>
<dbReference type="InterPro" id="IPR010992">
    <property type="entry name" value="IHF-like_DNA-bd_dom_sf"/>
</dbReference>
<dbReference type="InterPro" id="IPR005684">
    <property type="entry name" value="IHF_alpha"/>
</dbReference>
<dbReference type="NCBIfam" id="TIGR00987">
    <property type="entry name" value="himA"/>
    <property type="match status" value="1"/>
</dbReference>
<dbReference type="NCBIfam" id="NF001401">
    <property type="entry name" value="PRK00285.1"/>
    <property type="match status" value="1"/>
</dbReference>
<dbReference type="PANTHER" id="PTHR33175">
    <property type="entry name" value="DNA-BINDING PROTEIN HU"/>
    <property type="match status" value="1"/>
</dbReference>
<dbReference type="PANTHER" id="PTHR33175:SF2">
    <property type="entry name" value="INTEGRATION HOST FACTOR SUBUNIT ALPHA"/>
    <property type="match status" value="1"/>
</dbReference>
<dbReference type="Pfam" id="PF00216">
    <property type="entry name" value="Bac_DNA_binding"/>
    <property type="match status" value="1"/>
</dbReference>
<dbReference type="PRINTS" id="PR01727">
    <property type="entry name" value="DNABINDINGHU"/>
</dbReference>
<dbReference type="SMART" id="SM00411">
    <property type="entry name" value="BHL"/>
    <property type="match status" value="1"/>
</dbReference>
<dbReference type="SUPFAM" id="SSF47729">
    <property type="entry name" value="IHF-like DNA-binding proteins"/>
    <property type="match status" value="1"/>
</dbReference>
<dbReference type="PROSITE" id="PS00045">
    <property type="entry name" value="HISTONE_LIKE"/>
    <property type="match status" value="1"/>
</dbReference>